<feature type="chain" id="PRO_0000427835" description="RNA polymerase-binding transcription factor CarD">
    <location>
        <begin position="1"/>
        <end position="162"/>
    </location>
</feature>
<name>CARD_MYCTO</name>
<accession>P9WJG2</accession>
<accession>F2GJS9</accession>
<accession>L0TFY0</accession>
<accession>O53568</accession>
<accession>Q7D585</accession>
<gene>
    <name type="primary">carD</name>
    <name type="ordered locus">MT3689</name>
</gene>
<proteinExistence type="inferred from homology"/>
<dbReference type="EMBL" id="AE000516">
    <property type="protein sequence ID" value="AAK48047.1"/>
    <property type="molecule type" value="Genomic_DNA"/>
</dbReference>
<dbReference type="PIR" id="H70803">
    <property type="entry name" value="H70803"/>
</dbReference>
<dbReference type="RefSeq" id="WP_003419482.1">
    <property type="nucleotide sequence ID" value="NZ_KK341227.1"/>
</dbReference>
<dbReference type="EMDB" id="EMD-21406"/>
<dbReference type="EMDB" id="EMD-21407"/>
<dbReference type="EMDB" id="EMD-21408"/>
<dbReference type="EMDB" id="EMD-21409"/>
<dbReference type="EMDB" id="EMD-22886"/>
<dbReference type="EMDB" id="EMD-22887"/>
<dbReference type="EMDB" id="EMD-22888"/>
<dbReference type="EMDB" id="EMD-9037"/>
<dbReference type="EMDB" id="EMD-9039"/>
<dbReference type="EMDB" id="EMD-9041"/>
<dbReference type="SMR" id="P9WJG2"/>
<dbReference type="GeneID" id="93497169"/>
<dbReference type="KEGG" id="mtc:MT3689"/>
<dbReference type="PATRIC" id="fig|83331.31.peg.3972"/>
<dbReference type="HOGENOM" id="CLU_048259_1_2_11"/>
<dbReference type="Proteomes" id="UP000001020">
    <property type="component" value="Chromosome"/>
</dbReference>
<dbReference type="GO" id="GO:0009303">
    <property type="term" value="P:rRNA transcription"/>
    <property type="evidence" value="ECO:0007669"/>
    <property type="project" value="TreeGrafter"/>
</dbReference>
<dbReference type="FunFam" id="1.20.58.1290:FF:000001">
    <property type="entry name" value="CarD family transcriptional regulator"/>
    <property type="match status" value="1"/>
</dbReference>
<dbReference type="FunFam" id="2.40.10.170:FF:000001">
    <property type="entry name" value="CarD family transcriptional regulator"/>
    <property type="match status" value="1"/>
</dbReference>
<dbReference type="Gene3D" id="2.40.10.170">
    <property type="match status" value="1"/>
</dbReference>
<dbReference type="Gene3D" id="1.20.58.1290">
    <property type="entry name" value="CarD-like, C-terminal domain"/>
    <property type="match status" value="1"/>
</dbReference>
<dbReference type="InterPro" id="IPR003711">
    <property type="entry name" value="CarD-like/TRCF_RID"/>
</dbReference>
<dbReference type="InterPro" id="IPR036101">
    <property type="entry name" value="CarD-like/TRCF_RID_sf"/>
</dbReference>
<dbReference type="InterPro" id="IPR042215">
    <property type="entry name" value="CarD-like_C"/>
</dbReference>
<dbReference type="InterPro" id="IPR052531">
    <property type="entry name" value="CarD-like_regulator"/>
</dbReference>
<dbReference type="InterPro" id="IPR048792">
    <property type="entry name" value="CarD_C"/>
</dbReference>
<dbReference type="PANTHER" id="PTHR38447:SF1">
    <property type="entry name" value="RNA POLYMERASE-BINDING TRANSCRIPTION FACTOR CARD"/>
    <property type="match status" value="1"/>
</dbReference>
<dbReference type="PANTHER" id="PTHR38447">
    <property type="entry name" value="TRANSCRIPTION FACTOR YDEB-RELATED"/>
    <property type="match status" value="1"/>
</dbReference>
<dbReference type="Pfam" id="PF21095">
    <property type="entry name" value="CarD_C"/>
    <property type="match status" value="1"/>
</dbReference>
<dbReference type="Pfam" id="PF02559">
    <property type="entry name" value="CarD_TRCF_RID"/>
    <property type="match status" value="1"/>
</dbReference>
<dbReference type="SMART" id="SM01058">
    <property type="entry name" value="CarD_TRCF"/>
    <property type="match status" value="1"/>
</dbReference>
<dbReference type="SUPFAM" id="SSF141259">
    <property type="entry name" value="CarD-like"/>
    <property type="match status" value="1"/>
</dbReference>
<organism>
    <name type="scientific">Mycobacterium tuberculosis (strain CDC 1551 / Oshkosh)</name>
    <dbReference type="NCBI Taxonomy" id="83331"/>
    <lineage>
        <taxon>Bacteria</taxon>
        <taxon>Bacillati</taxon>
        <taxon>Actinomycetota</taxon>
        <taxon>Actinomycetes</taxon>
        <taxon>Mycobacteriales</taxon>
        <taxon>Mycobacteriaceae</taxon>
        <taxon>Mycobacterium</taxon>
        <taxon>Mycobacterium tuberculosis complex</taxon>
    </lineage>
</organism>
<protein>
    <recommendedName>
        <fullName>RNA polymerase-binding transcription factor CarD</fullName>
    </recommendedName>
</protein>
<reference key="1">
    <citation type="journal article" date="2002" name="J. Bacteriol.">
        <title>Whole-genome comparison of Mycobacterium tuberculosis clinical and laboratory strains.</title>
        <authorList>
            <person name="Fleischmann R.D."/>
            <person name="Alland D."/>
            <person name="Eisen J.A."/>
            <person name="Carpenter L."/>
            <person name="White O."/>
            <person name="Peterson J.D."/>
            <person name="DeBoy R.T."/>
            <person name="Dodson R.J."/>
            <person name="Gwinn M.L."/>
            <person name="Haft D.H."/>
            <person name="Hickey E.K."/>
            <person name="Kolonay J.F."/>
            <person name="Nelson W.C."/>
            <person name="Umayam L.A."/>
            <person name="Ermolaeva M.D."/>
            <person name="Salzberg S.L."/>
            <person name="Delcher A."/>
            <person name="Utterback T.R."/>
            <person name="Weidman J.F."/>
            <person name="Khouri H.M."/>
            <person name="Gill J."/>
            <person name="Mikula A."/>
            <person name="Bishai W."/>
            <person name="Jacobs W.R. Jr."/>
            <person name="Venter J.C."/>
            <person name="Fraser C.M."/>
        </authorList>
    </citation>
    <scope>NUCLEOTIDE SEQUENCE [LARGE SCALE GENOMIC DNA]</scope>
    <source>
        <strain>CDC 1551 / Oshkosh</strain>
    </source>
</reference>
<evidence type="ECO:0000250" key="1"/>
<evidence type="ECO:0000305" key="2"/>
<keyword id="KW-1185">Reference proteome</keyword>
<keyword id="KW-0843">Virulence</keyword>
<sequence length="162" mass="17907">MIFKVGDTVVYPHHGAALVEAIETRTIKGEQKEYLVLKVAQGDLTVRVPAENAEYVGVRDVVGQEGLDKVFQVLRAPHTEEPTNWSRRYKANLEKLASGDVNKVAEVVRDLWRRDQERGLSAGEKRMLAKARQILVGELALAESTDDAKAETILDEVLAAAS</sequence>
<comment type="function">
    <text evidence="1">Controls rRNA transcription by binding to the RNA polymerase (RNAP). Required for replication and persistence during infection of mice (By similarity).</text>
</comment>
<comment type="similarity">
    <text evidence="2">Belongs to the CarD family.</text>
</comment>